<proteinExistence type="inferred from homology"/>
<protein>
    <recommendedName>
        <fullName evidence="1">Recombination protein RecR</fullName>
    </recommendedName>
</protein>
<evidence type="ECO:0000255" key="1">
    <source>
        <dbReference type="HAMAP-Rule" id="MF_00017"/>
    </source>
</evidence>
<feature type="chain" id="PRO_1000001546" description="Recombination protein RecR">
    <location>
        <begin position="1"/>
        <end position="197"/>
    </location>
</feature>
<feature type="domain" description="Toprim" evidence="1">
    <location>
        <begin position="79"/>
        <end position="174"/>
    </location>
</feature>
<feature type="zinc finger region" description="C4-type" evidence="1">
    <location>
        <begin position="57"/>
        <end position="72"/>
    </location>
</feature>
<comment type="function">
    <text evidence="1">May play a role in DNA repair. It seems to be involved in an RecBC-independent recombinational process of DNA repair. It may act with RecF and RecO.</text>
</comment>
<comment type="similarity">
    <text evidence="1">Belongs to the RecR family.</text>
</comment>
<organism>
    <name type="scientific">Geobacter metallireducens (strain ATCC 53774 / DSM 7210 / GS-15)</name>
    <dbReference type="NCBI Taxonomy" id="269799"/>
    <lineage>
        <taxon>Bacteria</taxon>
        <taxon>Pseudomonadati</taxon>
        <taxon>Thermodesulfobacteriota</taxon>
        <taxon>Desulfuromonadia</taxon>
        <taxon>Geobacterales</taxon>
        <taxon>Geobacteraceae</taxon>
        <taxon>Geobacter</taxon>
    </lineage>
</organism>
<dbReference type="EMBL" id="CP000148">
    <property type="protein sequence ID" value="ABB33632.1"/>
    <property type="molecule type" value="Genomic_DNA"/>
</dbReference>
<dbReference type="RefSeq" id="WP_004514227.1">
    <property type="nucleotide sequence ID" value="NC_007517.1"/>
</dbReference>
<dbReference type="SMR" id="Q39Q42"/>
<dbReference type="STRING" id="269799.Gmet_3420"/>
<dbReference type="KEGG" id="gme:Gmet_3420"/>
<dbReference type="eggNOG" id="COG0353">
    <property type="taxonomic scope" value="Bacteria"/>
</dbReference>
<dbReference type="HOGENOM" id="CLU_060739_1_0_7"/>
<dbReference type="Proteomes" id="UP000007073">
    <property type="component" value="Chromosome"/>
</dbReference>
<dbReference type="GO" id="GO:0003677">
    <property type="term" value="F:DNA binding"/>
    <property type="evidence" value="ECO:0007669"/>
    <property type="project" value="UniProtKB-UniRule"/>
</dbReference>
<dbReference type="GO" id="GO:0008270">
    <property type="term" value="F:zinc ion binding"/>
    <property type="evidence" value="ECO:0007669"/>
    <property type="project" value="UniProtKB-KW"/>
</dbReference>
<dbReference type="GO" id="GO:0006310">
    <property type="term" value="P:DNA recombination"/>
    <property type="evidence" value="ECO:0007669"/>
    <property type="project" value="UniProtKB-UniRule"/>
</dbReference>
<dbReference type="GO" id="GO:0006281">
    <property type="term" value="P:DNA repair"/>
    <property type="evidence" value="ECO:0007669"/>
    <property type="project" value="UniProtKB-UniRule"/>
</dbReference>
<dbReference type="CDD" id="cd01025">
    <property type="entry name" value="TOPRIM_recR"/>
    <property type="match status" value="1"/>
</dbReference>
<dbReference type="Gene3D" id="3.30.60.80">
    <property type="match status" value="1"/>
</dbReference>
<dbReference type="Gene3D" id="3.40.1360.10">
    <property type="match status" value="1"/>
</dbReference>
<dbReference type="Gene3D" id="6.10.250.240">
    <property type="match status" value="1"/>
</dbReference>
<dbReference type="Gene3D" id="1.10.8.420">
    <property type="entry name" value="RecR Domain 1"/>
    <property type="match status" value="1"/>
</dbReference>
<dbReference type="HAMAP" id="MF_00017">
    <property type="entry name" value="RecR"/>
    <property type="match status" value="1"/>
</dbReference>
<dbReference type="InterPro" id="IPR000093">
    <property type="entry name" value="DNA_Rcmb_RecR"/>
</dbReference>
<dbReference type="InterPro" id="IPR003583">
    <property type="entry name" value="Hlx-hairpin-Hlx_DNA-bd_motif"/>
</dbReference>
<dbReference type="InterPro" id="IPR023627">
    <property type="entry name" value="Rcmb_RecR"/>
</dbReference>
<dbReference type="InterPro" id="IPR015967">
    <property type="entry name" value="Rcmb_RecR_Znf"/>
</dbReference>
<dbReference type="InterPro" id="IPR006171">
    <property type="entry name" value="TOPRIM_dom"/>
</dbReference>
<dbReference type="InterPro" id="IPR034137">
    <property type="entry name" value="TOPRIM_RecR"/>
</dbReference>
<dbReference type="NCBIfam" id="TIGR00615">
    <property type="entry name" value="recR"/>
    <property type="match status" value="1"/>
</dbReference>
<dbReference type="PANTHER" id="PTHR30446">
    <property type="entry name" value="RECOMBINATION PROTEIN RECR"/>
    <property type="match status" value="1"/>
</dbReference>
<dbReference type="PANTHER" id="PTHR30446:SF0">
    <property type="entry name" value="RECOMBINATION PROTEIN RECR"/>
    <property type="match status" value="1"/>
</dbReference>
<dbReference type="Pfam" id="PF21175">
    <property type="entry name" value="RecR_C"/>
    <property type="match status" value="1"/>
</dbReference>
<dbReference type="Pfam" id="PF21176">
    <property type="entry name" value="RecR_HhH"/>
    <property type="match status" value="1"/>
</dbReference>
<dbReference type="Pfam" id="PF02132">
    <property type="entry name" value="RecR_ZnF"/>
    <property type="match status" value="1"/>
</dbReference>
<dbReference type="Pfam" id="PF13662">
    <property type="entry name" value="Toprim_4"/>
    <property type="match status" value="1"/>
</dbReference>
<dbReference type="SMART" id="SM00278">
    <property type="entry name" value="HhH1"/>
    <property type="match status" value="1"/>
</dbReference>
<dbReference type="SMART" id="SM00493">
    <property type="entry name" value="TOPRIM"/>
    <property type="match status" value="1"/>
</dbReference>
<dbReference type="SUPFAM" id="SSF111304">
    <property type="entry name" value="Recombination protein RecR"/>
    <property type="match status" value="1"/>
</dbReference>
<dbReference type="PROSITE" id="PS50880">
    <property type="entry name" value="TOPRIM"/>
    <property type="match status" value="1"/>
</dbReference>
<reference key="1">
    <citation type="journal article" date="2009" name="BMC Microbiol.">
        <title>The genome sequence of Geobacter metallireducens: features of metabolism, physiology and regulation common and dissimilar to Geobacter sulfurreducens.</title>
        <authorList>
            <person name="Aklujkar M."/>
            <person name="Krushkal J."/>
            <person name="DiBartolo G."/>
            <person name="Lapidus A."/>
            <person name="Land M.L."/>
            <person name="Lovley D.R."/>
        </authorList>
    </citation>
    <scope>NUCLEOTIDE SEQUENCE [LARGE SCALE GENOMIC DNA]</scope>
    <source>
        <strain>ATCC 53774 / DSM 7210 / GS-15</strain>
    </source>
</reference>
<keyword id="KW-0227">DNA damage</keyword>
<keyword id="KW-0233">DNA recombination</keyword>
<keyword id="KW-0234">DNA repair</keyword>
<keyword id="KW-0479">Metal-binding</keyword>
<keyword id="KW-1185">Reference proteome</keyword>
<keyword id="KW-0862">Zinc</keyword>
<keyword id="KW-0863">Zinc-finger</keyword>
<name>RECR_GEOMG</name>
<accession>Q39Q42</accession>
<sequence length="197" mass="21768">MLQSSNSFARLLAELQKLPGVGEKTALRLAFHLLKYPENTAALAESLGEVLSRVKFCSVCFGITEEDPCRLCSSDRDETSLCVVEEPQDLLAVERTRAFRGRYHVLQGALSPLNGVTPDRLRIAELMRRLEEGTVREVVIATNFSVEGETTALYLARQIKPLGIRVTRLAHGIPLGSDLEYVDAATVQRALEGRSEL</sequence>
<gene>
    <name evidence="1" type="primary">recR</name>
    <name type="ordered locus">Gmet_3420</name>
</gene>